<accession>Q65VJ3</accession>
<proteinExistence type="inferred from homology"/>
<feature type="chain" id="PRO_1000011806" description="Mannitol-1-phosphate 5-dehydrogenase">
    <location>
        <begin position="1"/>
        <end position="382"/>
    </location>
</feature>
<feature type="binding site" evidence="1">
    <location>
        <begin position="3"/>
        <end position="14"/>
    </location>
    <ligand>
        <name>NAD(+)</name>
        <dbReference type="ChEBI" id="CHEBI:57540"/>
    </ligand>
</feature>
<reference key="1">
    <citation type="journal article" date="2004" name="Nat. Biotechnol.">
        <title>The genome sequence of the capnophilic rumen bacterium Mannheimia succiniciproducens.</title>
        <authorList>
            <person name="Hong S.H."/>
            <person name="Kim J.S."/>
            <person name="Lee S.Y."/>
            <person name="In Y.H."/>
            <person name="Choi S.S."/>
            <person name="Rih J.-K."/>
            <person name="Kim C.H."/>
            <person name="Jeong H."/>
            <person name="Hur C.G."/>
            <person name="Kim J.J."/>
        </authorList>
    </citation>
    <scope>NUCLEOTIDE SEQUENCE [LARGE SCALE GENOMIC DNA]</scope>
    <source>
        <strain>KCTC 0769BP / MBEL55E</strain>
    </source>
</reference>
<organism>
    <name type="scientific">Mannheimia succiniciproducens (strain KCTC 0769BP / MBEL55E)</name>
    <dbReference type="NCBI Taxonomy" id="221988"/>
    <lineage>
        <taxon>Bacteria</taxon>
        <taxon>Pseudomonadati</taxon>
        <taxon>Pseudomonadota</taxon>
        <taxon>Gammaproteobacteria</taxon>
        <taxon>Pasteurellales</taxon>
        <taxon>Pasteurellaceae</taxon>
        <taxon>Basfia</taxon>
    </lineage>
</organism>
<comment type="catalytic activity">
    <reaction evidence="1">
        <text>D-mannitol 1-phosphate + NAD(+) = beta-D-fructose 6-phosphate + NADH + H(+)</text>
        <dbReference type="Rhea" id="RHEA:19661"/>
        <dbReference type="ChEBI" id="CHEBI:15378"/>
        <dbReference type="ChEBI" id="CHEBI:57540"/>
        <dbReference type="ChEBI" id="CHEBI:57634"/>
        <dbReference type="ChEBI" id="CHEBI:57945"/>
        <dbReference type="ChEBI" id="CHEBI:61381"/>
        <dbReference type="EC" id="1.1.1.17"/>
    </reaction>
</comment>
<comment type="similarity">
    <text evidence="1">Belongs to the mannitol dehydrogenase family.</text>
</comment>
<name>MTLD_MANSM</name>
<keyword id="KW-0520">NAD</keyword>
<keyword id="KW-0560">Oxidoreductase</keyword>
<sequence>MKALHFGAGNIGRGFIGKLLADSGMQVIFADVNDSVIDLLKSRRSYGVKIVGDSINTVERVTQVTGVNSKDETAIITLFNEVDLVTTAVGPNVLKIVASTFAKALEARIAGGNTKPLNIIACENMVRGTSFLKEQVFTHLNPDYKDKVEQLIGFVDSAVDRIVPPVKPDAEDPLLVTVEEFSEWIVDQTQFKGAIPDIKGMELTDNLMAFVERKLFTLNTGHAVTSYYGKFKGYKFVKESIEDESVKAFVKSVMQESGAVLIKRYGFDPQAHAAYIEKILKRFANPYLVDDVDRVGREPLRKLSYNDRLIKPLRGTIEYGLPNDNLIRAIATALSYRNENDPQALELAKSLAEAGVTQTIKKYTELQDENVIARIAKAYETL</sequence>
<protein>
    <recommendedName>
        <fullName evidence="1">Mannitol-1-phosphate 5-dehydrogenase</fullName>
        <ecNumber evidence="1">1.1.1.17</ecNumber>
    </recommendedName>
</protein>
<gene>
    <name evidence="1" type="primary">mtlD</name>
    <name type="ordered locus">MS0410</name>
</gene>
<evidence type="ECO:0000255" key="1">
    <source>
        <dbReference type="HAMAP-Rule" id="MF_00196"/>
    </source>
</evidence>
<dbReference type="EC" id="1.1.1.17" evidence="1"/>
<dbReference type="EMBL" id="AE016827">
    <property type="protein sequence ID" value="AAU37017.1"/>
    <property type="molecule type" value="Genomic_DNA"/>
</dbReference>
<dbReference type="RefSeq" id="WP_011199592.1">
    <property type="nucleotide sequence ID" value="NC_006300.1"/>
</dbReference>
<dbReference type="SMR" id="Q65VJ3"/>
<dbReference type="STRING" id="221988.MS0410"/>
<dbReference type="KEGG" id="msu:MS0410"/>
<dbReference type="eggNOG" id="COG0246">
    <property type="taxonomic scope" value="Bacteria"/>
</dbReference>
<dbReference type="HOGENOM" id="CLU_036089_2_0_6"/>
<dbReference type="OrthoDB" id="271711at2"/>
<dbReference type="Proteomes" id="UP000000607">
    <property type="component" value="Chromosome"/>
</dbReference>
<dbReference type="GO" id="GO:0005829">
    <property type="term" value="C:cytosol"/>
    <property type="evidence" value="ECO:0007669"/>
    <property type="project" value="TreeGrafter"/>
</dbReference>
<dbReference type="GO" id="GO:0008926">
    <property type="term" value="F:mannitol-1-phosphate 5-dehydrogenase activity"/>
    <property type="evidence" value="ECO:0007669"/>
    <property type="project" value="UniProtKB-UniRule"/>
</dbReference>
<dbReference type="GO" id="GO:0019592">
    <property type="term" value="P:mannitol catabolic process"/>
    <property type="evidence" value="ECO:0007669"/>
    <property type="project" value="TreeGrafter"/>
</dbReference>
<dbReference type="FunFam" id="1.10.1040.10:FF:000009">
    <property type="entry name" value="Mannitol-1-phosphate 5-dehydrogenase"/>
    <property type="match status" value="1"/>
</dbReference>
<dbReference type="FunFam" id="3.40.50.720:FF:000075">
    <property type="entry name" value="Mannitol-1-phosphate 5-dehydrogenase"/>
    <property type="match status" value="1"/>
</dbReference>
<dbReference type="Gene3D" id="1.10.1040.10">
    <property type="entry name" value="N-(1-d-carboxylethyl)-l-norvaline Dehydrogenase, domain 2"/>
    <property type="match status" value="1"/>
</dbReference>
<dbReference type="Gene3D" id="3.40.50.720">
    <property type="entry name" value="NAD(P)-binding Rossmann-like Domain"/>
    <property type="match status" value="1"/>
</dbReference>
<dbReference type="HAMAP" id="MF_00196">
    <property type="entry name" value="Mannitol_dehydrog"/>
    <property type="match status" value="1"/>
</dbReference>
<dbReference type="InterPro" id="IPR008927">
    <property type="entry name" value="6-PGluconate_DH-like_C_sf"/>
</dbReference>
<dbReference type="InterPro" id="IPR013328">
    <property type="entry name" value="6PGD_dom2"/>
</dbReference>
<dbReference type="InterPro" id="IPR023028">
    <property type="entry name" value="Mannitol_1_phos_5_DH"/>
</dbReference>
<dbReference type="InterPro" id="IPR000669">
    <property type="entry name" value="Mannitol_DH"/>
</dbReference>
<dbReference type="InterPro" id="IPR013118">
    <property type="entry name" value="Mannitol_DH_C"/>
</dbReference>
<dbReference type="InterPro" id="IPR023027">
    <property type="entry name" value="Mannitol_DH_CS"/>
</dbReference>
<dbReference type="InterPro" id="IPR013131">
    <property type="entry name" value="Mannitol_DH_N"/>
</dbReference>
<dbReference type="InterPro" id="IPR036291">
    <property type="entry name" value="NAD(P)-bd_dom_sf"/>
</dbReference>
<dbReference type="NCBIfam" id="NF002646">
    <property type="entry name" value="PRK02318.1-2"/>
    <property type="match status" value="1"/>
</dbReference>
<dbReference type="NCBIfam" id="NF002647">
    <property type="entry name" value="PRK02318.1-3"/>
    <property type="match status" value="1"/>
</dbReference>
<dbReference type="NCBIfam" id="NF002650">
    <property type="entry name" value="PRK02318.2-2"/>
    <property type="match status" value="1"/>
</dbReference>
<dbReference type="NCBIfam" id="NF002652">
    <property type="entry name" value="PRK02318.2-5"/>
    <property type="match status" value="1"/>
</dbReference>
<dbReference type="PANTHER" id="PTHR30524:SF0">
    <property type="entry name" value="ALTRONATE OXIDOREDUCTASE-RELATED"/>
    <property type="match status" value="1"/>
</dbReference>
<dbReference type="PANTHER" id="PTHR30524">
    <property type="entry name" value="MANNITOL-1-PHOSPHATE 5-DEHYDROGENASE"/>
    <property type="match status" value="1"/>
</dbReference>
<dbReference type="Pfam" id="PF01232">
    <property type="entry name" value="Mannitol_dh"/>
    <property type="match status" value="1"/>
</dbReference>
<dbReference type="Pfam" id="PF08125">
    <property type="entry name" value="Mannitol_dh_C"/>
    <property type="match status" value="1"/>
</dbReference>
<dbReference type="PRINTS" id="PR00084">
    <property type="entry name" value="MTLDHDRGNASE"/>
</dbReference>
<dbReference type="SUPFAM" id="SSF48179">
    <property type="entry name" value="6-phosphogluconate dehydrogenase C-terminal domain-like"/>
    <property type="match status" value="1"/>
</dbReference>
<dbReference type="SUPFAM" id="SSF51735">
    <property type="entry name" value="NAD(P)-binding Rossmann-fold domains"/>
    <property type="match status" value="1"/>
</dbReference>
<dbReference type="PROSITE" id="PS00974">
    <property type="entry name" value="MANNITOL_DHGENASE"/>
    <property type="match status" value="1"/>
</dbReference>